<dbReference type="EC" id="6.1.1.20" evidence="1"/>
<dbReference type="EMBL" id="CR936257">
    <property type="protein sequence ID" value="CAI48438.1"/>
    <property type="molecule type" value="Genomic_DNA"/>
</dbReference>
<dbReference type="RefSeq" id="WP_011322074.1">
    <property type="nucleotide sequence ID" value="NC_007426.1"/>
</dbReference>
<dbReference type="SMR" id="Q3ITU5"/>
<dbReference type="STRING" id="348780.NP_0694A"/>
<dbReference type="EnsemblBacteria" id="CAI48438">
    <property type="protein sequence ID" value="CAI48438"/>
    <property type="gene ID" value="NP_0694A"/>
</dbReference>
<dbReference type="GeneID" id="3703026"/>
<dbReference type="KEGG" id="nph:NP_0694A"/>
<dbReference type="eggNOG" id="arCOG00412">
    <property type="taxonomic scope" value="Archaea"/>
</dbReference>
<dbReference type="HOGENOM" id="CLU_020279_3_0_2"/>
<dbReference type="OrthoDB" id="10073at2157"/>
<dbReference type="Proteomes" id="UP000002698">
    <property type="component" value="Chromosome"/>
</dbReference>
<dbReference type="GO" id="GO:0009328">
    <property type="term" value="C:phenylalanine-tRNA ligase complex"/>
    <property type="evidence" value="ECO:0007669"/>
    <property type="project" value="TreeGrafter"/>
</dbReference>
<dbReference type="GO" id="GO:0005524">
    <property type="term" value="F:ATP binding"/>
    <property type="evidence" value="ECO:0007669"/>
    <property type="project" value="UniProtKB-UniRule"/>
</dbReference>
<dbReference type="GO" id="GO:0000287">
    <property type="term" value="F:magnesium ion binding"/>
    <property type="evidence" value="ECO:0007669"/>
    <property type="project" value="InterPro"/>
</dbReference>
<dbReference type="GO" id="GO:0004826">
    <property type="term" value="F:phenylalanine-tRNA ligase activity"/>
    <property type="evidence" value="ECO:0007669"/>
    <property type="project" value="UniProtKB-UniRule"/>
</dbReference>
<dbReference type="GO" id="GO:0003723">
    <property type="term" value="F:RNA binding"/>
    <property type="evidence" value="ECO:0007669"/>
    <property type="project" value="InterPro"/>
</dbReference>
<dbReference type="GO" id="GO:0006432">
    <property type="term" value="P:phenylalanyl-tRNA aminoacylation"/>
    <property type="evidence" value="ECO:0007669"/>
    <property type="project" value="UniProtKB-UniRule"/>
</dbReference>
<dbReference type="CDD" id="cd00769">
    <property type="entry name" value="PheRS_beta_core"/>
    <property type="match status" value="1"/>
</dbReference>
<dbReference type="FunFam" id="3.50.40.10:FF:000003">
    <property type="entry name" value="Phenylalanine--tRNA ligase beta subunit"/>
    <property type="match status" value="1"/>
</dbReference>
<dbReference type="Gene3D" id="3.30.56.10">
    <property type="match status" value="2"/>
</dbReference>
<dbReference type="Gene3D" id="3.30.930.10">
    <property type="entry name" value="Bira Bifunctional Protein, Domain 2"/>
    <property type="match status" value="1"/>
</dbReference>
<dbReference type="Gene3D" id="3.50.40.10">
    <property type="entry name" value="Phenylalanyl-trna Synthetase, Chain B, domain 3"/>
    <property type="match status" value="1"/>
</dbReference>
<dbReference type="HAMAP" id="MF_00284">
    <property type="entry name" value="Phe_tRNA_synth_beta2"/>
    <property type="match status" value="1"/>
</dbReference>
<dbReference type="InterPro" id="IPR045864">
    <property type="entry name" value="aa-tRNA-synth_II/BPL/LPL"/>
</dbReference>
<dbReference type="InterPro" id="IPR005146">
    <property type="entry name" value="B3/B4_tRNA-bd"/>
</dbReference>
<dbReference type="InterPro" id="IPR009061">
    <property type="entry name" value="DNA-bd_dom_put_sf"/>
</dbReference>
<dbReference type="InterPro" id="IPR045060">
    <property type="entry name" value="Phe-tRNA-ligase_IIc_bsu"/>
</dbReference>
<dbReference type="InterPro" id="IPR004531">
    <property type="entry name" value="Phe-tRNA-synth_IIc_bsu_arc_euk"/>
</dbReference>
<dbReference type="InterPro" id="IPR020825">
    <property type="entry name" value="Phe-tRNA_synthase-like_B3/B4"/>
</dbReference>
<dbReference type="InterPro" id="IPR022918">
    <property type="entry name" value="Phe_tRNA_ligase_beta2_arc"/>
</dbReference>
<dbReference type="InterPro" id="IPR041616">
    <property type="entry name" value="PheRS_beta_core"/>
</dbReference>
<dbReference type="InterPro" id="IPR005147">
    <property type="entry name" value="tRNA_synthase_B5-dom"/>
</dbReference>
<dbReference type="NCBIfam" id="TIGR00471">
    <property type="entry name" value="pheT_arch"/>
    <property type="match status" value="1"/>
</dbReference>
<dbReference type="PANTHER" id="PTHR10947:SF0">
    <property type="entry name" value="PHENYLALANINE--TRNA LIGASE BETA SUBUNIT"/>
    <property type="match status" value="1"/>
</dbReference>
<dbReference type="PANTHER" id="PTHR10947">
    <property type="entry name" value="PHENYLALANYL-TRNA SYNTHETASE BETA CHAIN AND LEUCINE-RICH REPEAT-CONTAINING PROTEIN 47"/>
    <property type="match status" value="1"/>
</dbReference>
<dbReference type="Pfam" id="PF03484">
    <property type="entry name" value="B5"/>
    <property type="match status" value="1"/>
</dbReference>
<dbReference type="Pfam" id="PF17759">
    <property type="entry name" value="tRNA_synthFbeta"/>
    <property type="match status" value="1"/>
</dbReference>
<dbReference type="SMART" id="SM00873">
    <property type="entry name" value="B3_4"/>
    <property type="match status" value="1"/>
</dbReference>
<dbReference type="SMART" id="SM00874">
    <property type="entry name" value="B5"/>
    <property type="match status" value="1"/>
</dbReference>
<dbReference type="SUPFAM" id="SSF55681">
    <property type="entry name" value="Class II aaRS and biotin synthetases"/>
    <property type="match status" value="1"/>
</dbReference>
<dbReference type="SUPFAM" id="SSF46955">
    <property type="entry name" value="Putative DNA-binding domain"/>
    <property type="match status" value="2"/>
</dbReference>
<dbReference type="PROSITE" id="PS51483">
    <property type="entry name" value="B5"/>
    <property type="match status" value="1"/>
</dbReference>
<protein>
    <recommendedName>
        <fullName evidence="1">Phenylalanine--tRNA ligase beta subunit</fullName>
        <ecNumber evidence="1">6.1.1.20</ecNumber>
    </recommendedName>
    <alternativeName>
        <fullName evidence="1">Phenylalanyl-tRNA synthetase beta subunit</fullName>
        <shortName evidence="1">PheRS</shortName>
    </alternativeName>
</protein>
<keyword id="KW-0030">Aminoacyl-tRNA synthetase</keyword>
<keyword id="KW-0067">ATP-binding</keyword>
<keyword id="KW-0963">Cytoplasm</keyword>
<keyword id="KW-0436">Ligase</keyword>
<keyword id="KW-0460">Magnesium</keyword>
<keyword id="KW-0479">Metal-binding</keyword>
<keyword id="KW-0547">Nucleotide-binding</keyword>
<keyword id="KW-0648">Protein biosynthesis</keyword>
<keyword id="KW-1185">Reference proteome</keyword>
<name>SYFB_NATPD</name>
<comment type="catalytic activity">
    <reaction evidence="1">
        <text>tRNA(Phe) + L-phenylalanine + ATP = L-phenylalanyl-tRNA(Phe) + AMP + diphosphate + H(+)</text>
        <dbReference type="Rhea" id="RHEA:19413"/>
        <dbReference type="Rhea" id="RHEA-COMP:9668"/>
        <dbReference type="Rhea" id="RHEA-COMP:9699"/>
        <dbReference type="ChEBI" id="CHEBI:15378"/>
        <dbReference type="ChEBI" id="CHEBI:30616"/>
        <dbReference type="ChEBI" id="CHEBI:33019"/>
        <dbReference type="ChEBI" id="CHEBI:58095"/>
        <dbReference type="ChEBI" id="CHEBI:78442"/>
        <dbReference type="ChEBI" id="CHEBI:78531"/>
        <dbReference type="ChEBI" id="CHEBI:456215"/>
        <dbReference type="EC" id="6.1.1.20"/>
    </reaction>
</comment>
<comment type="cofactor">
    <cofactor evidence="1">
        <name>Mg(2+)</name>
        <dbReference type="ChEBI" id="CHEBI:18420"/>
    </cofactor>
</comment>
<comment type="subunit">
    <text evidence="1">Tetramer of two alpha and two beta subunits.</text>
</comment>
<comment type="subcellular location">
    <subcellularLocation>
        <location evidence="1">Cytoplasm</location>
    </subcellularLocation>
</comment>
<comment type="similarity">
    <text evidence="1">Belongs to the phenylalanyl-tRNA synthetase beta subunit family. Type 2 subfamily.</text>
</comment>
<accession>Q3ITU5</accession>
<proteinExistence type="inferred from homology"/>
<sequence>MPVVEVDPDELRSLAAIEDKSDDELKDDLFALGLEFEGESDDGDFELEFAPDRLDRLSVEGIARSLRYQYGHDRGIDVPKTNDAEWTITVDESVPEARPYVTGAVVRGLDLDDTQLDSLIQLQEKLHATMGRNRAKGAIGVHDLTMLKGGGARSDGKPSKSITYRGVDPDGDRFVPLDDDAERTPAEVLDAHPTGETYGHLVDGLDRFPAIYDDIGLFSFPPVINGSRTEVDTGTRDLFIELTGTDQWTIDRMLAIICYALSARGGRIESVAVDYGDRTLTRPDLSTTTKTVSHDRIETTLGVDLAGTDVVDLLERSGLDAEADTEGELTYEVEIPAYRVDVLHPADIVDDVGRAFGFNELEPQYPDVSTVGGRHDRSRLEDAVRNTLVGLGFEDLLNFYMTSETELFDRMSLSPDDNAVGAREPPTITEPYSEDYTVVRTWALPSLLMVLENNTHRAYPQDLAEIGLVAGVDESKPTNVAEHRSVAGVVARTDASYEDAKARLQAIGSAFGVDIKTPPTDHPSFIDGRTAAVVIDGEPAGVIGELHPRVLVEHDLEVPVAGFEFRLDALAD</sequence>
<feature type="chain" id="PRO_1000022429" description="Phenylalanine--tRNA ligase beta subunit">
    <location>
        <begin position="1"/>
        <end position="572"/>
    </location>
</feature>
<feature type="domain" description="B5" evidence="1">
    <location>
        <begin position="285"/>
        <end position="363"/>
    </location>
</feature>
<feature type="binding site" evidence="1">
    <location>
        <position position="341"/>
    </location>
    <ligand>
        <name>Mg(2+)</name>
        <dbReference type="ChEBI" id="CHEBI:18420"/>
        <note>shared with alpha subunit</note>
    </ligand>
</feature>
<feature type="binding site" evidence="1">
    <location>
        <position position="347"/>
    </location>
    <ligand>
        <name>Mg(2+)</name>
        <dbReference type="ChEBI" id="CHEBI:18420"/>
        <note>shared with alpha subunit</note>
    </ligand>
</feature>
<feature type="binding site" evidence="1">
    <location>
        <position position="350"/>
    </location>
    <ligand>
        <name>Mg(2+)</name>
        <dbReference type="ChEBI" id="CHEBI:18420"/>
        <note>shared with alpha subunit</note>
    </ligand>
</feature>
<feature type="binding site" evidence="1">
    <location>
        <position position="351"/>
    </location>
    <ligand>
        <name>Mg(2+)</name>
        <dbReference type="ChEBI" id="CHEBI:18420"/>
        <note>shared with alpha subunit</note>
    </ligand>
</feature>
<organism>
    <name type="scientific">Natronomonas pharaonis (strain ATCC 35678 / DSM 2160 / CIP 103997 / JCM 8858 / NBRC 14720 / NCIMB 2260 / Gabara)</name>
    <name type="common">Halobacterium pharaonis</name>
    <dbReference type="NCBI Taxonomy" id="348780"/>
    <lineage>
        <taxon>Archaea</taxon>
        <taxon>Methanobacteriati</taxon>
        <taxon>Methanobacteriota</taxon>
        <taxon>Stenosarchaea group</taxon>
        <taxon>Halobacteria</taxon>
        <taxon>Halobacteriales</taxon>
        <taxon>Haloarculaceae</taxon>
        <taxon>Natronomonas</taxon>
    </lineage>
</organism>
<reference key="1">
    <citation type="journal article" date="2005" name="Genome Res.">
        <title>Living with two extremes: conclusions from the genome sequence of Natronomonas pharaonis.</title>
        <authorList>
            <person name="Falb M."/>
            <person name="Pfeiffer F."/>
            <person name="Palm P."/>
            <person name="Rodewald K."/>
            <person name="Hickmann V."/>
            <person name="Tittor J."/>
            <person name="Oesterhelt D."/>
        </authorList>
    </citation>
    <scope>NUCLEOTIDE SEQUENCE [LARGE SCALE GENOMIC DNA]</scope>
    <source>
        <strain>ATCC 35678 / DSM 2160 / CIP 103997 / JCM 8858 / NBRC 14720 / NCIMB 2260 / Gabara</strain>
    </source>
</reference>
<evidence type="ECO:0000255" key="1">
    <source>
        <dbReference type="HAMAP-Rule" id="MF_00284"/>
    </source>
</evidence>
<gene>
    <name evidence="1" type="primary">pheT</name>
    <name type="ordered locus">NP_0694A</name>
</gene>